<protein>
    <recommendedName>
        <fullName>MAM domain-containing glycosylphosphatidylinositol anchor protein 1</fullName>
    </recommendedName>
</protein>
<proteinExistence type="evidence at protein level"/>
<name>MDGA1_CHICK</name>
<reference evidence="8 9" key="1">
    <citation type="journal article" date="2006" name="Brain Res.">
        <title>MDGA1, an IgSF molecule containing a MAM domain, heterophilically associates with axon- and muscle-associated binding partners through distinct structural domains.</title>
        <authorList>
            <person name="Fujimura Y."/>
            <person name="Iwashita M."/>
            <person name="Matsuzaki F."/>
            <person name="Yamamoto T."/>
        </authorList>
    </citation>
    <scope>NUCLEOTIDE SEQUENCE [MRNA]</scope>
    <scope>SUBUNIT</scope>
    <scope>SUBCELLULAR LOCATION</scope>
    <scope>TISSUE SPECIFICITY</scope>
    <source>
        <tissue evidence="7">Embryonic spinal cord</tissue>
    </source>
</reference>
<comment type="function">
    <text evidence="1">Required for radial migration of cortical neurons in the superficial layer of the neocortex.</text>
</comment>
<comment type="subunit">
    <text evidence="7">Interacts heterophilically through its MAM domain with proteins in axon-rich regions and through its Ig-like domains with proteins in differentiating muscle.</text>
</comment>
<comment type="subcellular location">
    <subcellularLocation>
        <location evidence="7">Cell membrane</location>
        <topology evidence="7">Lipid-anchor</topology>
        <topology evidence="7">GPI-anchor</topology>
    </subcellularLocation>
    <text evidence="2 7">Associated with lipid rafts.</text>
</comment>
<comment type="tissue specificity">
    <text evidence="7">In the embryonic brachial spinal cord, selectively expressed by medial lateral motor column neurons, some populations of dorsal root ganglion neurons, and interneurons.</text>
</comment>
<accession>Q0WYX8</accession>
<evidence type="ECO:0000250" key="1">
    <source>
        <dbReference type="UniProtKB" id="Q0PMG2"/>
    </source>
</evidence>
<evidence type="ECO:0000250" key="2">
    <source>
        <dbReference type="UniProtKB" id="Q8NFP4"/>
    </source>
</evidence>
<evidence type="ECO:0000255" key="3"/>
<evidence type="ECO:0000255" key="4">
    <source>
        <dbReference type="PROSITE-ProRule" id="PRU00114"/>
    </source>
</evidence>
<evidence type="ECO:0000255" key="5">
    <source>
        <dbReference type="PROSITE-ProRule" id="PRU00128"/>
    </source>
</evidence>
<evidence type="ECO:0000255" key="6">
    <source>
        <dbReference type="PROSITE-ProRule" id="PRU00316"/>
    </source>
</evidence>
<evidence type="ECO:0000269" key="7">
    <source>
    </source>
</evidence>
<evidence type="ECO:0000305" key="8"/>
<evidence type="ECO:0000312" key="9">
    <source>
        <dbReference type="EMBL" id="BAE98269.1"/>
    </source>
</evidence>
<evidence type="ECO:0007829" key="10">
    <source>
        <dbReference type="PDB" id="5OJ2"/>
    </source>
</evidence>
<evidence type="ECO:0007829" key="11">
    <source>
        <dbReference type="PDB" id="5OJ6"/>
    </source>
</evidence>
<organism>
    <name type="scientific">Gallus gallus</name>
    <name type="common">Chicken</name>
    <dbReference type="NCBI Taxonomy" id="9031"/>
    <lineage>
        <taxon>Eukaryota</taxon>
        <taxon>Metazoa</taxon>
        <taxon>Chordata</taxon>
        <taxon>Craniata</taxon>
        <taxon>Vertebrata</taxon>
        <taxon>Euteleostomi</taxon>
        <taxon>Archelosauria</taxon>
        <taxon>Archosauria</taxon>
        <taxon>Dinosauria</taxon>
        <taxon>Saurischia</taxon>
        <taxon>Theropoda</taxon>
        <taxon>Coelurosauria</taxon>
        <taxon>Aves</taxon>
        <taxon>Neognathae</taxon>
        <taxon>Galloanserae</taxon>
        <taxon>Galliformes</taxon>
        <taxon>Phasianidae</taxon>
        <taxon>Phasianinae</taxon>
        <taxon>Gallus</taxon>
    </lineage>
</organism>
<gene>
    <name evidence="9" type="primary">MDGA1</name>
</gene>
<keyword id="KW-0002">3D-structure</keyword>
<keyword id="KW-1003">Cell membrane</keyword>
<keyword id="KW-0217">Developmental protein</keyword>
<keyword id="KW-0221">Differentiation</keyword>
<keyword id="KW-1015">Disulfide bond</keyword>
<keyword id="KW-0325">Glycoprotein</keyword>
<keyword id="KW-0336">GPI-anchor</keyword>
<keyword id="KW-0393">Immunoglobulin domain</keyword>
<keyword id="KW-0449">Lipoprotein</keyword>
<keyword id="KW-0472">Membrane</keyword>
<keyword id="KW-0524">Neurogenesis</keyword>
<keyword id="KW-1185">Reference proteome</keyword>
<keyword id="KW-0677">Repeat</keyword>
<keyword id="KW-0732">Signal</keyword>
<dbReference type="EMBL" id="AB241390">
    <property type="protein sequence ID" value="BAE98269.1"/>
    <property type="molecule type" value="mRNA"/>
</dbReference>
<dbReference type="RefSeq" id="NP_001038112.1">
    <property type="nucleotide sequence ID" value="NM_001044647.1"/>
</dbReference>
<dbReference type="PDB" id="5OJ2">
    <property type="method" value="X-ray"/>
    <property type="resolution" value="3.20 A"/>
    <property type="chains" value="A/B=19-919"/>
</dbReference>
<dbReference type="PDB" id="5OJ6">
    <property type="method" value="X-ray"/>
    <property type="resolution" value="3.30 A"/>
    <property type="chains" value="B=19-919"/>
</dbReference>
<dbReference type="PDBsum" id="5OJ2"/>
<dbReference type="PDBsum" id="5OJ6"/>
<dbReference type="SMR" id="Q0WYX8"/>
<dbReference type="FunCoup" id="Q0WYX8">
    <property type="interactions" value="107"/>
</dbReference>
<dbReference type="STRING" id="9031.ENSGALP00000066872"/>
<dbReference type="GlyCosmos" id="Q0WYX8">
    <property type="glycosylation" value="12 sites, No reported glycans"/>
</dbReference>
<dbReference type="GlyGen" id="Q0WYX8">
    <property type="glycosylation" value="13 sites"/>
</dbReference>
<dbReference type="PaxDb" id="9031-ENSGALP00000016475"/>
<dbReference type="KEGG" id="gga:421431"/>
<dbReference type="VEuPathDB" id="HostDB:geneid_421431"/>
<dbReference type="eggNOG" id="ENOG502QUWH">
    <property type="taxonomic scope" value="Eukaryota"/>
</dbReference>
<dbReference type="InParanoid" id="Q0WYX8"/>
<dbReference type="OrthoDB" id="6107927at2759"/>
<dbReference type="PhylomeDB" id="Q0WYX8"/>
<dbReference type="PRO" id="PR:Q0WYX8"/>
<dbReference type="Proteomes" id="UP000000539">
    <property type="component" value="Unassembled WGS sequence"/>
</dbReference>
<dbReference type="GO" id="GO:0005886">
    <property type="term" value="C:plasma membrane"/>
    <property type="evidence" value="ECO:0000314"/>
    <property type="project" value="UniProtKB"/>
</dbReference>
<dbReference type="GO" id="GO:0098552">
    <property type="term" value="C:side of membrane"/>
    <property type="evidence" value="ECO:0007669"/>
    <property type="project" value="UniProtKB-KW"/>
</dbReference>
<dbReference type="GO" id="GO:0001764">
    <property type="term" value="P:neuron migration"/>
    <property type="evidence" value="ECO:0000250"/>
    <property type="project" value="UniProtKB"/>
</dbReference>
<dbReference type="CDD" id="cd00096">
    <property type="entry name" value="Ig"/>
    <property type="match status" value="2"/>
</dbReference>
<dbReference type="CDD" id="cd06263">
    <property type="entry name" value="MAM"/>
    <property type="match status" value="1"/>
</dbReference>
<dbReference type="DisProt" id="DP02619"/>
<dbReference type="FunFam" id="2.60.40.10:FF:000240">
    <property type="entry name" value="MAM domain containing glycosylphosphatidylinositol anchor 1"/>
    <property type="match status" value="1"/>
</dbReference>
<dbReference type="FunFam" id="2.60.40.10:FF:000262">
    <property type="entry name" value="MAM domain containing glycosylphosphatidylinositol anchor 1"/>
    <property type="match status" value="1"/>
</dbReference>
<dbReference type="FunFam" id="2.60.40.10:FF:000303">
    <property type="entry name" value="MAM domain containing glycosylphosphatidylinositol anchor 1"/>
    <property type="match status" value="1"/>
</dbReference>
<dbReference type="FunFam" id="2.60.120.200:FF:000019">
    <property type="entry name" value="MAM domain containing glycosylphosphatidylinositol anchor 2"/>
    <property type="match status" value="1"/>
</dbReference>
<dbReference type="FunFam" id="2.60.40.10:FF:000165">
    <property type="entry name" value="MAM domain containing glycosylphosphatidylinositol anchor 2"/>
    <property type="match status" value="1"/>
</dbReference>
<dbReference type="FunFam" id="2.60.40.10:FF:000243">
    <property type="entry name" value="MAM domain-containing glycosylphosphatidylinositol anchor protein 1"/>
    <property type="match status" value="1"/>
</dbReference>
<dbReference type="Gene3D" id="2.60.120.200">
    <property type="match status" value="1"/>
</dbReference>
<dbReference type="Gene3D" id="2.60.40.10">
    <property type="entry name" value="Immunoglobulins"/>
    <property type="match status" value="7"/>
</dbReference>
<dbReference type="InterPro" id="IPR050958">
    <property type="entry name" value="Cell_Adh-Cytoskel_Orgn"/>
</dbReference>
<dbReference type="InterPro" id="IPR013320">
    <property type="entry name" value="ConA-like_dom_sf"/>
</dbReference>
<dbReference type="InterPro" id="IPR003961">
    <property type="entry name" value="FN3_dom"/>
</dbReference>
<dbReference type="InterPro" id="IPR036116">
    <property type="entry name" value="FN3_sf"/>
</dbReference>
<dbReference type="InterPro" id="IPR007110">
    <property type="entry name" value="Ig-like_dom"/>
</dbReference>
<dbReference type="InterPro" id="IPR036179">
    <property type="entry name" value="Ig-like_dom_sf"/>
</dbReference>
<dbReference type="InterPro" id="IPR013783">
    <property type="entry name" value="Ig-like_fold"/>
</dbReference>
<dbReference type="InterPro" id="IPR003599">
    <property type="entry name" value="Ig_sub"/>
</dbReference>
<dbReference type="InterPro" id="IPR003598">
    <property type="entry name" value="Ig_sub2"/>
</dbReference>
<dbReference type="InterPro" id="IPR000998">
    <property type="entry name" value="MAM_dom"/>
</dbReference>
<dbReference type="PANTHER" id="PTHR45080">
    <property type="entry name" value="CONTACTIN 5"/>
    <property type="match status" value="1"/>
</dbReference>
<dbReference type="PANTHER" id="PTHR45080:SF32">
    <property type="entry name" value="MAM DOMAIN CONTAINING GLYCOSYLPHOSPHATIDYLINOSITOL ANCHOR 1"/>
    <property type="match status" value="1"/>
</dbReference>
<dbReference type="Pfam" id="PF13927">
    <property type="entry name" value="Ig_3"/>
    <property type="match status" value="6"/>
</dbReference>
<dbReference type="Pfam" id="PF00629">
    <property type="entry name" value="MAM"/>
    <property type="match status" value="1"/>
</dbReference>
<dbReference type="PRINTS" id="PR00020">
    <property type="entry name" value="MAMDOMAIN"/>
</dbReference>
<dbReference type="SMART" id="SM00409">
    <property type="entry name" value="IG"/>
    <property type="match status" value="6"/>
</dbReference>
<dbReference type="SMART" id="SM00408">
    <property type="entry name" value="IGc2"/>
    <property type="match status" value="6"/>
</dbReference>
<dbReference type="SMART" id="SM00137">
    <property type="entry name" value="MAM"/>
    <property type="match status" value="1"/>
</dbReference>
<dbReference type="SUPFAM" id="SSF49899">
    <property type="entry name" value="Concanavalin A-like lectins/glucanases"/>
    <property type="match status" value="1"/>
</dbReference>
<dbReference type="SUPFAM" id="SSF49265">
    <property type="entry name" value="Fibronectin type III"/>
    <property type="match status" value="1"/>
</dbReference>
<dbReference type="SUPFAM" id="SSF48726">
    <property type="entry name" value="Immunoglobulin"/>
    <property type="match status" value="6"/>
</dbReference>
<dbReference type="PROSITE" id="PS50853">
    <property type="entry name" value="FN3"/>
    <property type="match status" value="1"/>
</dbReference>
<dbReference type="PROSITE" id="PS50835">
    <property type="entry name" value="IG_LIKE"/>
    <property type="match status" value="6"/>
</dbReference>
<dbReference type="PROSITE" id="PS50060">
    <property type="entry name" value="MAM_2"/>
    <property type="match status" value="1"/>
</dbReference>
<sequence length="949" mass="106025">MEMICVLFLSLVPAYSRGQGVYAPAQAQIIHAGQACVVKEDNISERVYTIREGDTLVLQCLVTGHPRPQVRWTKTAGSASDKFQETSVLNETLRIEKIQRLQGGRYYCKAENGVGVPAIRSIRVDVQYLDEPVLTVHQTISDVRGSFYQEKTVFLRCTVNSNPPARFIWKRGAETLSHSQDNGVDIYEPLYTQGETKVLKLKNLRPQDYASYTCQVSVRNVCSIPDKSITFQLTNTTAPPALKLSVNETLVVNPGDNVTMQCSLTGGDPQPEVLWSHSPGPLPPNSLVQGGNLTIWRIRVEDSGYYNCTAINNVGNPAKKTVNLLVRSMKNATFQITPDVIKESETIQLGQDLKLSCHVDAVPQEKVVYSWYKNGKPARFSDRLLITRNDPELPPVTCSLEIIDLRFSDYGTYLCVATFQGAPIPDLSVEVNISSETVPPTISVPKGQSTITVREGSRAELQCEVRGKPKPPIIWSRVDKETPMPSGTMTVETYDGKLRLESVSRDMSGTYKCQTARYNGFNIRPREALVQLNVQFPPVVEPAFQDVRQGMGRSVTLRCTMLKGSPMKVATSVWRFNGTLLAQPPAEQQDYSELKVDSVSRETSGSYECSISNDVGVSACLFQVSAKAYSPEFYYDTPNPTLSQKQSKNYSYILQWTQKEPDAVDPILKYRLEVRQLAQRNTIQTFIPVQKMEKGLLLEHILPNLKVPQSYEVRLTPITSFGAGDMAARIIRYMEPINYPSPTDNTCRFEDEKICGFVQDKMDNFDWTRQNALTQNPKRTVNTGPPTDISGTPEGYYMFIEASRPRVTGDKARLISPLYNITAKYYCVSFYYHMYGKHIGSLNLLVRVRNKRAIDTQVWSLSGNRGNMWQQAHVPINPPGPFQIIFEGVRGTSYEGDIAIDDVTLKKGDCPRKPIGPNKAVALPGSGVSAQHGPCLCGPLTFFLYVLLR</sequence>
<feature type="signal peptide" evidence="3">
    <location>
        <begin position="1"/>
        <end position="18"/>
    </location>
</feature>
<feature type="chain" id="PRO_0000292930" description="MAM domain-containing glycosylphosphatidylinositol anchor protein 1" evidence="3">
    <location>
        <begin position="19"/>
        <end position="926"/>
    </location>
</feature>
<feature type="propeptide" id="PRO_0000292931" description="Removed in mature form" evidence="3">
    <location>
        <begin position="927"/>
        <end position="949"/>
    </location>
</feature>
<feature type="domain" description="Ig-like 1" evidence="3">
    <location>
        <begin position="24"/>
        <end position="125"/>
    </location>
</feature>
<feature type="domain" description="Ig-like 2" evidence="3">
    <location>
        <begin position="132"/>
        <end position="230"/>
    </location>
</feature>
<feature type="domain" description="Ig-like 3" evidence="3">
    <location>
        <begin position="240"/>
        <end position="323"/>
    </location>
</feature>
<feature type="domain" description="Ig-like 4" evidence="3">
    <location>
        <begin position="338"/>
        <end position="432"/>
    </location>
</feature>
<feature type="domain" description="Ig-like 5" evidence="3">
    <location>
        <begin position="440"/>
        <end position="531"/>
    </location>
</feature>
<feature type="domain" description="Ig-like 6" evidence="3">
    <location>
        <begin position="537"/>
        <end position="625"/>
    </location>
</feature>
<feature type="domain" description="Fibronectin type-III" evidence="6">
    <location>
        <begin position="637"/>
        <end position="737"/>
    </location>
</feature>
<feature type="domain" description="MAM" evidence="5">
    <location>
        <begin position="745"/>
        <end position="912"/>
    </location>
</feature>
<feature type="lipid moiety-binding region" description="GPI-anchor amidated serine" evidence="3">
    <location>
        <position position="926"/>
    </location>
</feature>
<feature type="glycosylation site" description="N-linked (GlcNAc...) asparagine" evidence="3">
    <location>
        <position position="42"/>
    </location>
</feature>
<feature type="glycosylation site" description="N-linked (GlcNAc...) asparagine" evidence="3">
    <location>
        <position position="90"/>
    </location>
</feature>
<feature type="glycosylation site" description="N-linked (GlcNAc...) asparagine" evidence="3">
    <location>
        <position position="235"/>
    </location>
</feature>
<feature type="glycosylation site" description="N-linked (GlcNAc...) asparagine" evidence="3">
    <location>
        <position position="247"/>
    </location>
</feature>
<feature type="glycosylation site" description="N-linked (GlcNAc...) asparagine" evidence="3">
    <location>
        <position position="257"/>
    </location>
</feature>
<feature type="glycosylation site" description="N-linked (GlcNAc...) asparagine" evidence="3">
    <location>
        <position position="292"/>
    </location>
</feature>
<feature type="glycosylation site" description="N-linked (GlcNAc...) asparagine" evidence="3">
    <location>
        <position position="307"/>
    </location>
</feature>
<feature type="glycosylation site" description="N-linked (GlcNAc...) asparagine" evidence="3">
    <location>
        <position position="331"/>
    </location>
</feature>
<feature type="glycosylation site" description="N-linked (GlcNAc...) asparagine" evidence="3">
    <location>
        <position position="432"/>
    </location>
</feature>
<feature type="glycosylation site" description="N-linked (GlcNAc...) asparagine" evidence="3">
    <location>
        <position position="577"/>
    </location>
</feature>
<feature type="glycosylation site" description="N-linked (GlcNAc...) asparagine" evidence="3">
    <location>
        <position position="649"/>
    </location>
</feature>
<feature type="glycosylation site" description="N-linked (GlcNAc...) asparagine" evidence="3">
    <location>
        <position position="820"/>
    </location>
</feature>
<feature type="disulfide bond" evidence="4">
    <location>
        <begin position="60"/>
        <end position="108"/>
    </location>
</feature>
<feature type="disulfide bond" evidence="4">
    <location>
        <begin position="157"/>
        <end position="214"/>
    </location>
</feature>
<feature type="disulfide bond" evidence="4">
    <location>
        <begin position="262"/>
        <end position="308"/>
    </location>
</feature>
<feature type="disulfide bond" evidence="4">
    <location>
        <begin position="357"/>
        <end position="415"/>
    </location>
</feature>
<feature type="disulfide bond" evidence="4">
    <location>
        <begin position="463"/>
        <end position="513"/>
    </location>
</feature>
<feature type="disulfide bond" evidence="4">
    <location>
        <begin position="559"/>
        <end position="609"/>
    </location>
</feature>
<feature type="strand" evidence="10">
    <location>
        <begin position="23"/>
        <end position="34"/>
    </location>
</feature>
<feature type="strand" evidence="10">
    <location>
        <begin position="47"/>
        <end position="51"/>
    </location>
</feature>
<feature type="strand" evidence="10">
    <location>
        <begin position="56"/>
        <end position="66"/>
    </location>
</feature>
<feature type="strand" evidence="10">
    <location>
        <begin position="69"/>
        <end position="74"/>
    </location>
</feature>
<feature type="strand" evidence="11">
    <location>
        <begin position="80"/>
        <end position="82"/>
    </location>
</feature>
<feature type="strand" evidence="10">
    <location>
        <begin position="88"/>
        <end position="97"/>
    </location>
</feature>
<feature type="turn" evidence="10">
    <location>
        <begin position="100"/>
        <end position="102"/>
    </location>
</feature>
<feature type="strand" evidence="10">
    <location>
        <begin position="104"/>
        <end position="111"/>
    </location>
</feature>
<feature type="strand" evidence="10">
    <location>
        <begin position="113"/>
        <end position="116"/>
    </location>
</feature>
<feature type="strand" evidence="10">
    <location>
        <begin position="118"/>
        <end position="129"/>
    </location>
</feature>
<feature type="strand" evidence="10">
    <location>
        <begin position="133"/>
        <end position="144"/>
    </location>
</feature>
<feature type="strand" evidence="10">
    <location>
        <begin position="146"/>
        <end position="158"/>
    </location>
</feature>
<feature type="strand" evidence="10">
    <location>
        <begin position="161"/>
        <end position="163"/>
    </location>
</feature>
<feature type="strand" evidence="10">
    <location>
        <begin position="166"/>
        <end position="174"/>
    </location>
</feature>
<feature type="strand" evidence="10">
    <location>
        <begin position="184"/>
        <end position="187"/>
    </location>
</feature>
<feature type="strand" evidence="10">
    <location>
        <begin position="193"/>
        <end position="203"/>
    </location>
</feature>
<feature type="helix" evidence="10">
    <location>
        <begin position="206"/>
        <end position="208"/>
    </location>
</feature>
<feature type="strand" evidence="10">
    <location>
        <begin position="210"/>
        <end position="217"/>
    </location>
</feature>
<feature type="helix" evidence="10">
    <location>
        <begin position="221"/>
        <end position="223"/>
    </location>
</feature>
<feature type="strand" evidence="10">
    <location>
        <begin position="227"/>
        <end position="232"/>
    </location>
</feature>
<feature type="strand" evidence="10">
    <location>
        <begin position="238"/>
        <end position="246"/>
    </location>
</feature>
<feature type="strand" evidence="10">
    <location>
        <begin position="248"/>
        <end position="252"/>
    </location>
</feature>
<feature type="strand" evidence="10">
    <location>
        <begin position="258"/>
        <end position="269"/>
    </location>
</feature>
<feature type="strand" evidence="10">
    <location>
        <begin position="272"/>
        <end position="280"/>
    </location>
</feature>
<feature type="strand" evidence="10">
    <location>
        <begin position="284"/>
        <end position="288"/>
    </location>
</feature>
<feature type="strand" evidence="10">
    <location>
        <begin position="290"/>
        <end position="295"/>
    </location>
</feature>
<feature type="helix" evidence="10">
    <location>
        <begin position="300"/>
        <end position="302"/>
    </location>
</feature>
<feature type="strand" evidence="10">
    <location>
        <begin position="304"/>
        <end position="311"/>
    </location>
</feature>
<feature type="strand" evidence="10">
    <location>
        <begin position="313"/>
        <end position="316"/>
    </location>
</feature>
<feature type="strand" evidence="10">
    <location>
        <begin position="318"/>
        <end position="326"/>
    </location>
</feature>
<feature type="strand" evidence="10">
    <location>
        <begin position="329"/>
        <end position="337"/>
    </location>
</feature>
<feature type="turn" evidence="10">
    <location>
        <begin position="340"/>
        <end position="343"/>
    </location>
</feature>
<feature type="strand" evidence="10">
    <location>
        <begin position="353"/>
        <end position="361"/>
    </location>
</feature>
<feature type="helix" evidence="10">
    <location>
        <begin position="364"/>
        <end position="366"/>
    </location>
</feature>
<feature type="strand" evidence="10">
    <location>
        <begin position="367"/>
        <end position="375"/>
    </location>
</feature>
<feature type="strand" evidence="10">
    <location>
        <begin position="383"/>
        <end position="396"/>
    </location>
</feature>
<feature type="strand" evidence="10">
    <location>
        <begin position="398"/>
        <end position="404"/>
    </location>
</feature>
<feature type="helix" evidence="10">
    <location>
        <begin position="407"/>
        <end position="409"/>
    </location>
</feature>
<feature type="strand" evidence="10">
    <location>
        <begin position="411"/>
        <end position="419"/>
    </location>
</feature>
<feature type="strand" evidence="10">
    <location>
        <begin position="427"/>
        <end position="432"/>
    </location>
</feature>
<feature type="strand" evidence="10">
    <location>
        <begin position="438"/>
        <end position="443"/>
    </location>
</feature>
<feature type="strand" evidence="10">
    <location>
        <begin position="449"/>
        <end position="454"/>
    </location>
</feature>
<feature type="strand" evidence="10">
    <location>
        <begin position="459"/>
        <end position="462"/>
    </location>
</feature>
<feature type="strand" evidence="10">
    <location>
        <begin position="464"/>
        <end position="469"/>
    </location>
</feature>
<feature type="strand" evidence="10">
    <location>
        <begin position="473"/>
        <end position="480"/>
    </location>
</feature>
<feature type="strand" evidence="10">
    <location>
        <begin position="487"/>
        <end position="489"/>
    </location>
</feature>
<feature type="strand" evidence="10">
    <location>
        <begin position="491"/>
        <end position="502"/>
    </location>
</feature>
<feature type="helix" evidence="10">
    <location>
        <begin position="505"/>
        <end position="507"/>
    </location>
</feature>
<feature type="strand" evidence="10">
    <location>
        <begin position="509"/>
        <end position="515"/>
    </location>
</feature>
<feature type="strand" evidence="10">
    <location>
        <begin position="517"/>
        <end position="521"/>
    </location>
</feature>
<feature type="strand" evidence="10">
    <location>
        <begin position="527"/>
        <end position="541"/>
    </location>
</feature>
<feature type="strand" evidence="10">
    <location>
        <begin position="545"/>
        <end position="548"/>
    </location>
</feature>
<feature type="strand" evidence="10">
    <location>
        <begin position="555"/>
        <end position="566"/>
    </location>
</feature>
<feature type="strand" evidence="10">
    <location>
        <begin position="571"/>
        <end position="576"/>
    </location>
</feature>
<feature type="strand" evidence="10">
    <location>
        <begin position="591"/>
        <end position="598"/>
    </location>
</feature>
<feature type="turn" evidence="10">
    <location>
        <begin position="601"/>
        <end position="603"/>
    </location>
</feature>
<feature type="strand" evidence="10">
    <location>
        <begin position="605"/>
        <end position="612"/>
    </location>
</feature>
<feature type="strand" evidence="10">
    <location>
        <begin position="617"/>
        <end position="625"/>
    </location>
</feature>
<feature type="strand" evidence="10">
    <location>
        <begin position="631"/>
        <end position="633"/>
    </location>
</feature>
<feature type="strand" evidence="10">
    <location>
        <begin position="640"/>
        <end position="643"/>
    </location>
</feature>
<feature type="strand" evidence="10">
    <location>
        <begin position="649"/>
        <end position="659"/>
    </location>
</feature>
<feature type="helix" evidence="10">
    <location>
        <begin position="661"/>
        <end position="663"/>
    </location>
</feature>
<feature type="strand" evidence="10">
    <location>
        <begin position="669"/>
        <end position="675"/>
    </location>
</feature>
<feature type="strand" evidence="10">
    <location>
        <begin position="683"/>
        <end position="688"/>
    </location>
</feature>
<feature type="strand" evidence="10">
    <location>
        <begin position="698"/>
        <end position="708"/>
    </location>
</feature>
<feature type="strand" evidence="10">
    <location>
        <begin position="711"/>
        <end position="719"/>
    </location>
</feature>
<feature type="strand" evidence="10">
    <location>
        <begin position="727"/>
        <end position="731"/>
    </location>
</feature>